<evidence type="ECO:0000255" key="1">
    <source>
        <dbReference type="HAMAP-Rule" id="MF_00198"/>
    </source>
</evidence>
<comment type="function">
    <text evidence="1">Catalyzes the irreversible transfer of a propylamine group from the amino donor S-adenosylmethioninamine (decarboxy-AdoMet) to putrescine (1,4-diaminobutane) to yield spermidine.</text>
</comment>
<comment type="catalytic activity">
    <reaction evidence="1">
        <text>S-adenosyl 3-(methylsulfanyl)propylamine + putrescine = S-methyl-5'-thioadenosine + spermidine + H(+)</text>
        <dbReference type="Rhea" id="RHEA:12721"/>
        <dbReference type="ChEBI" id="CHEBI:15378"/>
        <dbReference type="ChEBI" id="CHEBI:17509"/>
        <dbReference type="ChEBI" id="CHEBI:57443"/>
        <dbReference type="ChEBI" id="CHEBI:57834"/>
        <dbReference type="ChEBI" id="CHEBI:326268"/>
        <dbReference type="EC" id="2.5.1.16"/>
    </reaction>
</comment>
<comment type="pathway">
    <text evidence="1">Amine and polyamine biosynthesis; spermidine biosynthesis; spermidine from putrescine: step 1/1.</text>
</comment>
<comment type="subunit">
    <text evidence="1">Homodimer or homotetramer.</text>
</comment>
<comment type="subcellular location">
    <subcellularLocation>
        <location evidence="1">Cytoplasm</location>
    </subcellularLocation>
</comment>
<comment type="similarity">
    <text evidence="1">Belongs to the spermidine/spermine synthase family.</text>
</comment>
<organism>
    <name type="scientific">Escherichia fergusonii (strain ATCC 35469 / DSM 13698 / CCUG 18766 / IAM 14443 / JCM 21226 / LMG 7866 / NBRC 102419 / NCTC 12128 / CDC 0568-73)</name>
    <dbReference type="NCBI Taxonomy" id="585054"/>
    <lineage>
        <taxon>Bacteria</taxon>
        <taxon>Pseudomonadati</taxon>
        <taxon>Pseudomonadota</taxon>
        <taxon>Gammaproteobacteria</taxon>
        <taxon>Enterobacterales</taxon>
        <taxon>Enterobacteriaceae</taxon>
        <taxon>Escherichia</taxon>
    </lineage>
</organism>
<keyword id="KW-0963">Cytoplasm</keyword>
<keyword id="KW-0620">Polyamine biosynthesis</keyword>
<keyword id="KW-0745">Spermidine biosynthesis</keyword>
<keyword id="KW-0808">Transferase</keyword>
<sequence length="288" mass="32248">MAEKKQWHETLHDQFGQYFAVDNVLYHEKTDHQDLIIFENAAFGRVMALDGVVQTTERDEFIYHEMMTHVPLLAHGHAKDVLIIGGGDGAMLREVTRHKNVESITMVEIDAGVVSFCRQYLPNHNAGSYDDPRFKLVIDDGVNFVNQTSQTFDVIISDCTDPIGPGESLFTSAFYEGCKRCLNPGGIFVAQNGVCFLQQEEAIDSHRKLSNYFSDVGFYQAAIPTYYGGIMTFAWATDNDALRHLSSEIIQARFLASGLKCRYYNPAVHTAAFALPQYLQDALASQPS</sequence>
<reference key="1">
    <citation type="journal article" date="2009" name="PLoS Genet.">
        <title>Organised genome dynamics in the Escherichia coli species results in highly diverse adaptive paths.</title>
        <authorList>
            <person name="Touchon M."/>
            <person name="Hoede C."/>
            <person name="Tenaillon O."/>
            <person name="Barbe V."/>
            <person name="Baeriswyl S."/>
            <person name="Bidet P."/>
            <person name="Bingen E."/>
            <person name="Bonacorsi S."/>
            <person name="Bouchier C."/>
            <person name="Bouvet O."/>
            <person name="Calteau A."/>
            <person name="Chiapello H."/>
            <person name="Clermont O."/>
            <person name="Cruveiller S."/>
            <person name="Danchin A."/>
            <person name="Diard M."/>
            <person name="Dossat C."/>
            <person name="Karoui M.E."/>
            <person name="Frapy E."/>
            <person name="Garry L."/>
            <person name="Ghigo J.M."/>
            <person name="Gilles A.M."/>
            <person name="Johnson J."/>
            <person name="Le Bouguenec C."/>
            <person name="Lescat M."/>
            <person name="Mangenot S."/>
            <person name="Martinez-Jehanne V."/>
            <person name="Matic I."/>
            <person name="Nassif X."/>
            <person name="Oztas S."/>
            <person name="Petit M.A."/>
            <person name="Pichon C."/>
            <person name="Rouy Z."/>
            <person name="Ruf C.S."/>
            <person name="Schneider D."/>
            <person name="Tourret J."/>
            <person name="Vacherie B."/>
            <person name="Vallenet D."/>
            <person name="Medigue C."/>
            <person name="Rocha E.P.C."/>
            <person name="Denamur E."/>
        </authorList>
    </citation>
    <scope>NUCLEOTIDE SEQUENCE [LARGE SCALE GENOMIC DNA]</scope>
    <source>
        <strain>ATCC 35469 / DSM 13698 / BCRC 15582 / CCUG 18766 / IAM 14443 / JCM 21226 / LMG 7866 / NBRC 102419 / NCTC 12128 / CDC 0568-73</strain>
    </source>
</reference>
<accession>B7LVY5</accession>
<dbReference type="EC" id="2.5.1.16" evidence="1"/>
<dbReference type="EMBL" id="CU928158">
    <property type="protein sequence ID" value="CAQ87725.1"/>
    <property type="molecule type" value="Genomic_DNA"/>
</dbReference>
<dbReference type="RefSeq" id="WP_000818399.1">
    <property type="nucleotide sequence ID" value="NC_011740.1"/>
</dbReference>
<dbReference type="SMR" id="B7LVY5"/>
<dbReference type="GeneID" id="75058773"/>
<dbReference type="KEGG" id="efe:EFER_0142"/>
<dbReference type="HOGENOM" id="CLU_048199_0_0_6"/>
<dbReference type="OrthoDB" id="9793120at2"/>
<dbReference type="UniPathway" id="UPA00248">
    <property type="reaction ID" value="UER00314"/>
</dbReference>
<dbReference type="Proteomes" id="UP000000745">
    <property type="component" value="Chromosome"/>
</dbReference>
<dbReference type="GO" id="GO:0005829">
    <property type="term" value="C:cytosol"/>
    <property type="evidence" value="ECO:0007669"/>
    <property type="project" value="TreeGrafter"/>
</dbReference>
<dbReference type="GO" id="GO:0004766">
    <property type="term" value="F:spermidine synthase activity"/>
    <property type="evidence" value="ECO:0007669"/>
    <property type="project" value="UniProtKB-UniRule"/>
</dbReference>
<dbReference type="GO" id="GO:0008295">
    <property type="term" value="P:spermidine biosynthetic process"/>
    <property type="evidence" value="ECO:0007669"/>
    <property type="project" value="UniProtKB-UniRule"/>
</dbReference>
<dbReference type="CDD" id="cd02440">
    <property type="entry name" value="AdoMet_MTases"/>
    <property type="match status" value="1"/>
</dbReference>
<dbReference type="FunFam" id="2.30.140.10:FF:000002">
    <property type="entry name" value="Polyamine aminopropyltransferase"/>
    <property type="match status" value="1"/>
</dbReference>
<dbReference type="FunFam" id="3.40.50.150:FF:000026">
    <property type="entry name" value="Polyamine aminopropyltransferase"/>
    <property type="match status" value="1"/>
</dbReference>
<dbReference type="Gene3D" id="2.30.140.10">
    <property type="entry name" value="Spermidine synthase, tetramerisation domain"/>
    <property type="match status" value="1"/>
</dbReference>
<dbReference type="Gene3D" id="3.40.50.150">
    <property type="entry name" value="Vaccinia Virus protein VP39"/>
    <property type="match status" value="1"/>
</dbReference>
<dbReference type="HAMAP" id="MF_00198">
    <property type="entry name" value="Spermidine_synth"/>
    <property type="match status" value="1"/>
</dbReference>
<dbReference type="InterPro" id="IPR030374">
    <property type="entry name" value="PABS"/>
</dbReference>
<dbReference type="InterPro" id="IPR030373">
    <property type="entry name" value="PABS_CS"/>
</dbReference>
<dbReference type="InterPro" id="IPR029063">
    <property type="entry name" value="SAM-dependent_MTases_sf"/>
</dbReference>
<dbReference type="InterPro" id="IPR001045">
    <property type="entry name" value="Spermi_synthase"/>
</dbReference>
<dbReference type="InterPro" id="IPR035246">
    <property type="entry name" value="Spermidine_synt_N"/>
</dbReference>
<dbReference type="InterPro" id="IPR037163">
    <property type="entry name" value="Spermidine_synt_N_sf"/>
</dbReference>
<dbReference type="NCBIfam" id="NF037959">
    <property type="entry name" value="MFS_SpdSyn"/>
    <property type="match status" value="1"/>
</dbReference>
<dbReference type="NCBIfam" id="NF002010">
    <property type="entry name" value="PRK00811.1"/>
    <property type="match status" value="1"/>
</dbReference>
<dbReference type="NCBIfam" id="TIGR00417">
    <property type="entry name" value="speE"/>
    <property type="match status" value="1"/>
</dbReference>
<dbReference type="PANTHER" id="PTHR11558:SF11">
    <property type="entry name" value="SPERMIDINE SYNTHASE"/>
    <property type="match status" value="1"/>
</dbReference>
<dbReference type="PANTHER" id="PTHR11558">
    <property type="entry name" value="SPERMIDINE/SPERMINE SYNTHASE"/>
    <property type="match status" value="1"/>
</dbReference>
<dbReference type="Pfam" id="PF17284">
    <property type="entry name" value="Spermine_synt_N"/>
    <property type="match status" value="1"/>
</dbReference>
<dbReference type="Pfam" id="PF01564">
    <property type="entry name" value="Spermine_synth"/>
    <property type="match status" value="1"/>
</dbReference>
<dbReference type="SUPFAM" id="SSF53335">
    <property type="entry name" value="S-adenosyl-L-methionine-dependent methyltransferases"/>
    <property type="match status" value="1"/>
</dbReference>
<dbReference type="PROSITE" id="PS01330">
    <property type="entry name" value="PABS_1"/>
    <property type="match status" value="1"/>
</dbReference>
<dbReference type="PROSITE" id="PS51006">
    <property type="entry name" value="PABS_2"/>
    <property type="match status" value="1"/>
</dbReference>
<proteinExistence type="inferred from homology"/>
<name>SPEE_ESCF3</name>
<protein>
    <recommendedName>
        <fullName evidence="1">Polyamine aminopropyltransferase</fullName>
    </recommendedName>
    <alternativeName>
        <fullName evidence="1">Putrescine aminopropyltransferase</fullName>
        <shortName evidence="1">PAPT</shortName>
    </alternativeName>
    <alternativeName>
        <fullName evidence="1">Spermidine synthase</fullName>
        <shortName evidence="1">SPDS</shortName>
        <shortName evidence="1">SPDSY</shortName>
        <ecNumber evidence="1">2.5.1.16</ecNumber>
    </alternativeName>
</protein>
<feature type="chain" id="PRO_1000197475" description="Polyamine aminopropyltransferase">
    <location>
        <begin position="1"/>
        <end position="288"/>
    </location>
</feature>
<feature type="domain" description="PABS" evidence="1">
    <location>
        <begin position="9"/>
        <end position="238"/>
    </location>
</feature>
<feature type="active site" description="Proton acceptor" evidence="1">
    <location>
        <position position="158"/>
    </location>
</feature>
<feature type="binding site" evidence="1">
    <location>
        <position position="33"/>
    </location>
    <ligand>
        <name>S-methyl-5'-thioadenosine</name>
        <dbReference type="ChEBI" id="CHEBI:17509"/>
    </ligand>
</feature>
<feature type="binding site" evidence="1">
    <location>
        <position position="64"/>
    </location>
    <ligand>
        <name>spermidine</name>
        <dbReference type="ChEBI" id="CHEBI:57834"/>
    </ligand>
</feature>
<feature type="binding site" evidence="1">
    <location>
        <position position="88"/>
    </location>
    <ligand>
        <name>spermidine</name>
        <dbReference type="ChEBI" id="CHEBI:57834"/>
    </ligand>
</feature>
<feature type="binding site" evidence="1">
    <location>
        <position position="108"/>
    </location>
    <ligand>
        <name>S-methyl-5'-thioadenosine</name>
        <dbReference type="ChEBI" id="CHEBI:17509"/>
    </ligand>
</feature>
<feature type="binding site" evidence="1">
    <location>
        <begin position="140"/>
        <end position="141"/>
    </location>
    <ligand>
        <name>S-methyl-5'-thioadenosine</name>
        <dbReference type="ChEBI" id="CHEBI:17509"/>
    </ligand>
</feature>
<feature type="binding site" evidence="1">
    <location>
        <begin position="158"/>
        <end position="161"/>
    </location>
    <ligand>
        <name>spermidine</name>
        <dbReference type="ChEBI" id="CHEBI:57834"/>
    </ligand>
</feature>
<feature type="binding site" evidence="1">
    <location>
        <position position="165"/>
    </location>
    <ligand>
        <name>S-methyl-5'-thioadenosine</name>
        <dbReference type="ChEBI" id="CHEBI:17509"/>
    </ligand>
</feature>
<gene>
    <name evidence="1" type="primary">speE</name>
    <name type="ordered locus">EFER_0142</name>
</gene>